<comment type="function">
    <text evidence="1">This is one of the proteins that bind and probably mediate the attachment of the 5S RNA into the large ribosomal subunit, where it forms part of the central protuberance. In the 70S ribosome it contacts protein S13 of the 30S subunit (bridge B1b), connecting the 2 subunits; this bridge is implicated in subunit movement. Contacts the P site tRNA; the 5S rRNA and some of its associated proteins might help stabilize positioning of ribosome-bound tRNAs.</text>
</comment>
<comment type="subunit">
    <text evidence="1">Part of the 50S ribosomal subunit; part of the 5S rRNA/L5/L18/L25 subcomplex. Contacts the 5S rRNA and the P site tRNA. Forms a bridge to the 30S subunit in the 70S ribosome.</text>
</comment>
<comment type="similarity">
    <text evidence="1">Belongs to the universal ribosomal protein uL5 family.</text>
</comment>
<accession>Q664T3</accession>
<reference key="1">
    <citation type="journal article" date="2004" name="Proc. Natl. Acad. Sci. U.S.A.">
        <title>Insights into the evolution of Yersinia pestis through whole-genome comparison with Yersinia pseudotuberculosis.</title>
        <authorList>
            <person name="Chain P.S.G."/>
            <person name="Carniel E."/>
            <person name="Larimer F.W."/>
            <person name="Lamerdin J."/>
            <person name="Stoutland P.O."/>
            <person name="Regala W.M."/>
            <person name="Georgescu A.M."/>
            <person name="Vergez L.M."/>
            <person name="Land M.L."/>
            <person name="Motin V.L."/>
            <person name="Brubaker R.R."/>
            <person name="Fowler J."/>
            <person name="Hinnebusch J."/>
            <person name="Marceau M."/>
            <person name="Medigue C."/>
            <person name="Simonet M."/>
            <person name="Chenal-Francisque V."/>
            <person name="Souza B."/>
            <person name="Dacheux D."/>
            <person name="Elliott J.M."/>
            <person name="Derbise A."/>
            <person name="Hauser L.J."/>
            <person name="Garcia E."/>
        </authorList>
    </citation>
    <scope>NUCLEOTIDE SEQUENCE [LARGE SCALE GENOMIC DNA]</scope>
    <source>
        <strain>IP32953</strain>
    </source>
</reference>
<evidence type="ECO:0000255" key="1">
    <source>
        <dbReference type="HAMAP-Rule" id="MF_01333"/>
    </source>
</evidence>
<evidence type="ECO:0000305" key="2"/>
<keyword id="KW-0687">Ribonucleoprotein</keyword>
<keyword id="KW-0689">Ribosomal protein</keyword>
<keyword id="KW-0694">RNA-binding</keyword>
<keyword id="KW-0699">rRNA-binding</keyword>
<keyword id="KW-0820">tRNA-binding</keyword>
<gene>
    <name evidence="1" type="primary">rplE</name>
    <name type="ordered locus">YPTB3686</name>
</gene>
<protein>
    <recommendedName>
        <fullName evidence="1">Large ribosomal subunit protein uL5</fullName>
    </recommendedName>
    <alternativeName>
        <fullName evidence="2">50S ribosomal protein L5</fullName>
    </alternativeName>
</protein>
<feature type="chain" id="PRO_0000243090" description="Large ribosomal subunit protein uL5">
    <location>
        <begin position="1"/>
        <end position="179"/>
    </location>
</feature>
<dbReference type="EMBL" id="BX936398">
    <property type="protein sequence ID" value="CAH22924.1"/>
    <property type="molecule type" value="Genomic_DNA"/>
</dbReference>
<dbReference type="RefSeq" id="WP_002213329.1">
    <property type="nucleotide sequence ID" value="NZ_CP009712.1"/>
</dbReference>
<dbReference type="SMR" id="Q664T3"/>
<dbReference type="GeneID" id="96663184"/>
<dbReference type="KEGG" id="ypo:BZ17_2901"/>
<dbReference type="KEGG" id="yps:YPTB3686"/>
<dbReference type="PATRIC" id="fig|273123.14.peg.3042"/>
<dbReference type="Proteomes" id="UP000001011">
    <property type="component" value="Chromosome"/>
</dbReference>
<dbReference type="GO" id="GO:1990904">
    <property type="term" value="C:ribonucleoprotein complex"/>
    <property type="evidence" value="ECO:0007669"/>
    <property type="project" value="UniProtKB-KW"/>
</dbReference>
<dbReference type="GO" id="GO:0005840">
    <property type="term" value="C:ribosome"/>
    <property type="evidence" value="ECO:0007669"/>
    <property type="project" value="UniProtKB-KW"/>
</dbReference>
<dbReference type="GO" id="GO:0019843">
    <property type="term" value="F:rRNA binding"/>
    <property type="evidence" value="ECO:0007669"/>
    <property type="project" value="UniProtKB-UniRule"/>
</dbReference>
<dbReference type="GO" id="GO:0003735">
    <property type="term" value="F:structural constituent of ribosome"/>
    <property type="evidence" value="ECO:0007669"/>
    <property type="project" value="InterPro"/>
</dbReference>
<dbReference type="GO" id="GO:0000049">
    <property type="term" value="F:tRNA binding"/>
    <property type="evidence" value="ECO:0007669"/>
    <property type="project" value="UniProtKB-UniRule"/>
</dbReference>
<dbReference type="GO" id="GO:0006412">
    <property type="term" value="P:translation"/>
    <property type="evidence" value="ECO:0007669"/>
    <property type="project" value="UniProtKB-UniRule"/>
</dbReference>
<dbReference type="FunFam" id="3.30.1440.10:FF:000001">
    <property type="entry name" value="50S ribosomal protein L5"/>
    <property type="match status" value="1"/>
</dbReference>
<dbReference type="Gene3D" id="3.30.1440.10">
    <property type="match status" value="1"/>
</dbReference>
<dbReference type="HAMAP" id="MF_01333_B">
    <property type="entry name" value="Ribosomal_uL5_B"/>
    <property type="match status" value="1"/>
</dbReference>
<dbReference type="InterPro" id="IPR002132">
    <property type="entry name" value="Ribosomal_uL5"/>
</dbReference>
<dbReference type="InterPro" id="IPR020930">
    <property type="entry name" value="Ribosomal_uL5_bac-type"/>
</dbReference>
<dbReference type="InterPro" id="IPR031309">
    <property type="entry name" value="Ribosomal_uL5_C"/>
</dbReference>
<dbReference type="InterPro" id="IPR022803">
    <property type="entry name" value="Ribosomal_uL5_dom_sf"/>
</dbReference>
<dbReference type="InterPro" id="IPR031310">
    <property type="entry name" value="Ribosomal_uL5_N"/>
</dbReference>
<dbReference type="NCBIfam" id="NF000585">
    <property type="entry name" value="PRK00010.1"/>
    <property type="match status" value="1"/>
</dbReference>
<dbReference type="PANTHER" id="PTHR11994">
    <property type="entry name" value="60S RIBOSOMAL PROTEIN L11-RELATED"/>
    <property type="match status" value="1"/>
</dbReference>
<dbReference type="Pfam" id="PF00281">
    <property type="entry name" value="Ribosomal_L5"/>
    <property type="match status" value="1"/>
</dbReference>
<dbReference type="Pfam" id="PF00673">
    <property type="entry name" value="Ribosomal_L5_C"/>
    <property type="match status" value="1"/>
</dbReference>
<dbReference type="PIRSF" id="PIRSF002161">
    <property type="entry name" value="Ribosomal_L5"/>
    <property type="match status" value="1"/>
</dbReference>
<dbReference type="SUPFAM" id="SSF55282">
    <property type="entry name" value="RL5-like"/>
    <property type="match status" value="1"/>
</dbReference>
<proteinExistence type="inferred from homology"/>
<name>RL5_YERPS</name>
<organism>
    <name type="scientific">Yersinia pseudotuberculosis serotype I (strain IP32953)</name>
    <dbReference type="NCBI Taxonomy" id="273123"/>
    <lineage>
        <taxon>Bacteria</taxon>
        <taxon>Pseudomonadati</taxon>
        <taxon>Pseudomonadota</taxon>
        <taxon>Gammaproteobacteria</taxon>
        <taxon>Enterobacterales</taxon>
        <taxon>Yersiniaceae</taxon>
        <taxon>Yersinia</taxon>
    </lineage>
</organism>
<sequence>MAKLHDYYKDEVVKQLMSQFGYDSVMQVPRVEKITLNMGVGEAIADKKLLDNAAADLAAISGQKPFITKARKSVAGFKIRQGYPIGCKVTLRGERMWEFFERLITIAVPRIRDFRGLSAKSFDGRGNYSMGVREQIIFPEIDYDKVDRVRGLDITITTTAKSDDEGRALLAAFKFPFRK</sequence>